<feature type="peptide" id="PRO_0000438428" description="Peptide PGLa-B1" evidence="2">
    <location>
        <begin position="1"/>
        <end position="22"/>
    </location>
</feature>
<feature type="modified residue" description="Leucine amide" evidence="2">
    <location>
        <position position="22"/>
    </location>
</feature>
<name>PGLB1_XENBO</name>
<proteinExistence type="evidence at protein level"/>
<dbReference type="GO" id="GO:0005576">
    <property type="term" value="C:extracellular region"/>
    <property type="evidence" value="ECO:0007669"/>
    <property type="project" value="UniProtKB-SubCell"/>
</dbReference>
<dbReference type="GO" id="GO:0042742">
    <property type="term" value="P:defense response to bacterium"/>
    <property type="evidence" value="ECO:0007669"/>
    <property type="project" value="UniProtKB-KW"/>
</dbReference>
<dbReference type="GO" id="GO:0050832">
    <property type="term" value="P:defense response to fungus"/>
    <property type="evidence" value="ECO:0007669"/>
    <property type="project" value="UniProtKB-KW"/>
</dbReference>
<dbReference type="GO" id="GO:0031640">
    <property type="term" value="P:killing of cells of another organism"/>
    <property type="evidence" value="ECO:0007669"/>
    <property type="project" value="UniProtKB-KW"/>
</dbReference>
<protein>
    <recommendedName>
        <fullName evidence="3">Peptide PGLa-B1</fullName>
    </recommendedName>
</protein>
<organism evidence="3">
    <name type="scientific">Xenopus borealis</name>
    <name type="common">Kenyan clawed frog</name>
    <dbReference type="NCBI Taxonomy" id="8354"/>
    <lineage>
        <taxon>Eukaryota</taxon>
        <taxon>Metazoa</taxon>
        <taxon>Chordata</taxon>
        <taxon>Craniata</taxon>
        <taxon>Vertebrata</taxon>
        <taxon>Euteleostomi</taxon>
        <taxon>Amphibia</taxon>
        <taxon>Batrachia</taxon>
        <taxon>Anura</taxon>
        <taxon>Pipoidea</taxon>
        <taxon>Pipidae</taxon>
        <taxon>Xenopodinae</taxon>
        <taxon>Xenopus</taxon>
        <taxon>Xenopus</taxon>
    </lineage>
</organism>
<comment type="function">
    <text evidence="1">Has antibacterial and antifungal activity.</text>
</comment>
<comment type="subcellular location">
    <subcellularLocation>
        <location evidence="2">Secreted</location>
    </subcellularLocation>
</comment>
<comment type="tissue specificity">
    <text evidence="5">Expressed by the skin glands.</text>
</comment>
<comment type="mass spectrometry"/>
<comment type="similarity">
    <text evidence="4">Belongs to the gastrin/cholecystokinin family. Magainin subfamily.</text>
</comment>
<reference evidence="4" key="1">
    <citation type="journal article" date="2010" name="Comp. Biochem. Physiol.">
        <title>Antimicrobial peptides with therapeutic potential from skin secretions of the Marsabit clawed frog Xenopus borealis (Pipidae).</title>
        <authorList>
            <person name="Mechkarska M."/>
            <person name="Ahmed E."/>
            <person name="Coquet L."/>
            <person name="Leprince J."/>
            <person name="Jouenne T."/>
            <person name="Vaudry H."/>
            <person name="King J.D."/>
            <person name="Conlon J.M."/>
        </authorList>
    </citation>
    <scope>PROTEIN SEQUENCE</scope>
    <scope>SUBCELLULAR LOCATION</scope>
    <scope>MASS SPECTROMETRY</scope>
    <scope>AMIDATION AT LEU-22</scope>
    <source>
        <tissue evidence="3">Skin secretion</tissue>
    </source>
</reference>
<evidence type="ECO:0000250" key="1">
    <source>
        <dbReference type="UniProtKB" id="C0HK87"/>
    </source>
</evidence>
<evidence type="ECO:0000269" key="2">
    <source>
    </source>
</evidence>
<evidence type="ECO:0000303" key="3">
    <source>
    </source>
</evidence>
<evidence type="ECO:0000305" key="4"/>
<evidence type="ECO:0000305" key="5">
    <source>
    </source>
</evidence>
<keyword id="KW-0027">Amidation</keyword>
<keyword id="KW-0044">Antibiotic</keyword>
<keyword id="KW-0929">Antimicrobial</keyword>
<keyword id="KW-0903">Direct protein sequencing</keyword>
<keyword id="KW-0295">Fungicide</keyword>
<keyword id="KW-0964">Secreted</keyword>
<sequence>GMASKAGTIAGKIAKTAIKLAL</sequence>
<accession>C0HK88</accession>